<sequence>MRHRKSGRQLNRNSSHRQAMFRNMAGSLVRHEIIKTTLPKAKELRRVVEPLITLAKTDSVANRRLAFARTRDNEIVAKLFNELGPRFASRAGGYTRILKCGFRAGDNAPMAYIELVDRSEKAEAAAE</sequence>
<protein>
    <recommendedName>
        <fullName evidence="1">Large ribosomal subunit protein bL17</fullName>
    </recommendedName>
    <alternativeName>
        <fullName evidence="2">50S ribosomal protein L17</fullName>
    </alternativeName>
</protein>
<gene>
    <name evidence="1" type="primary">rplQ</name>
    <name type="ordered locus">Z4664</name>
    <name type="ordered locus">ECs4159</name>
</gene>
<organism>
    <name type="scientific">Escherichia coli O157:H7</name>
    <dbReference type="NCBI Taxonomy" id="83334"/>
    <lineage>
        <taxon>Bacteria</taxon>
        <taxon>Pseudomonadati</taxon>
        <taxon>Pseudomonadota</taxon>
        <taxon>Gammaproteobacteria</taxon>
        <taxon>Enterobacterales</taxon>
        <taxon>Enterobacteriaceae</taxon>
        <taxon>Escherichia</taxon>
    </lineage>
</organism>
<keyword id="KW-1185">Reference proteome</keyword>
<keyword id="KW-0687">Ribonucleoprotein</keyword>
<keyword id="KW-0689">Ribosomal protein</keyword>
<proteinExistence type="inferred from homology"/>
<comment type="subunit">
    <text evidence="1">Part of the 50S ribosomal subunit. Contacts protein L32.</text>
</comment>
<comment type="similarity">
    <text evidence="1">Belongs to the bacterial ribosomal protein bL17 family.</text>
</comment>
<accession>P0AG46</accession>
<accession>P02416</accession>
<feature type="chain" id="PRO_0000175525" description="Large ribosomal subunit protein bL17">
    <location>
        <begin position="1"/>
        <end position="127"/>
    </location>
</feature>
<evidence type="ECO:0000255" key="1">
    <source>
        <dbReference type="HAMAP-Rule" id="MF_01368"/>
    </source>
</evidence>
<evidence type="ECO:0000305" key="2"/>
<name>RL17_ECO57</name>
<reference key="1">
    <citation type="journal article" date="2001" name="Nature">
        <title>Genome sequence of enterohaemorrhagic Escherichia coli O157:H7.</title>
        <authorList>
            <person name="Perna N.T."/>
            <person name="Plunkett G. III"/>
            <person name="Burland V."/>
            <person name="Mau B."/>
            <person name="Glasner J.D."/>
            <person name="Rose D.J."/>
            <person name="Mayhew G.F."/>
            <person name="Evans P.S."/>
            <person name="Gregor J."/>
            <person name="Kirkpatrick H.A."/>
            <person name="Posfai G."/>
            <person name="Hackett J."/>
            <person name="Klink S."/>
            <person name="Boutin A."/>
            <person name="Shao Y."/>
            <person name="Miller L."/>
            <person name="Grotbeck E.J."/>
            <person name="Davis N.W."/>
            <person name="Lim A."/>
            <person name="Dimalanta E.T."/>
            <person name="Potamousis K."/>
            <person name="Apodaca J."/>
            <person name="Anantharaman T.S."/>
            <person name="Lin J."/>
            <person name="Yen G."/>
            <person name="Schwartz D.C."/>
            <person name="Welch R.A."/>
            <person name="Blattner F.R."/>
        </authorList>
    </citation>
    <scope>NUCLEOTIDE SEQUENCE [LARGE SCALE GENOMIC DNA]</scope>
    <source>
        <strain>O157:H7 / EDL933 / ATCC 700927 / EHEC</strain>
    </source>
</reference>
<reference key="2">
    <citation type="journal article" date="2001" name="DNA Res.">
        <title>Complete genome sequence of enterohemorrhagic Escherichia coli O157:H7 and genomic comparison with a laboratory strain K-12.</title>
        <authorList>
            <person name="Hayashi T."/>
            <person name="Makino K."/>
            <person name="Ohnishi M."/>
            <person name="Kurokawa K."/>
            <person name="Ishii K."/>
            <person name="Yokoyama K."/>
            <person name="Han C.-G."/>
            <person name="Ohtsubo E."/>
            <person name="Nakayama K."/>
            <person name="Murata T."/>
            <person name="Tanaka M."/>
            <person name="Tobe T."/>
            <person name="Iida T."/>
            <person name="Takami H."/>
            <person name="Honda T."/>
            <person name="Sasakawa C."/>
            <person name="Ogasawara N."/>
            <person name="Yasunaga T."/>
            <person name="Kuhara S."/>
            <person name="Shiba T."/>
            <person name="Hattori M."/>
            <person name="Shinagawa H."/>
        </authorList>
    </citation>
    <scope>NUCLEOTIDE SEQUENCE [LARGE SCALE GENOMIC DNA]</scope>
    <source>
        <strain>O157:H7 / Sakai / RIMD 0509952 / EHEC</strain>
    </source>
</reference>
<dbReference type="EMBL" id="AE005174">
    <property type="protein sequence ID" value="AAG58415.1"/>
    <property type="molecule type" value="Genomic_DNA"/>
</dbReference>
<dbReference type="EMBL" id="BA000007">
    <property type="protein sequence ID" value="BAB37582.1"/>
    <property type="molecule type" value="Genomic_DNA"/>
</dbReference>
<dbReference type="PIR" id="C85994">
    <property type="entry name" value="C85994"/>
</dbReference>
<dbReference type="PIR" id="G91148">
    <property type="entry name" value="G91148"/>
</dbReference>
<dbReference type="RefSeq" id="NP_312186.1">
    <property type="nucleotide sequence ID" value="NC_002695.1"/>
</dbReference>
<dbReference type="RefSeq" id="WP_001216368.1">
    <property type="nucleotide sequence ID" value="NZ_VOAI01000041.1"/>
</dbReference>
<dbReference type="SMR" id="P0AG46"/>
<dbReference type="STRING" id="155864.Z4664"/>
<dbReference type="GeneID" id="915985"/>
<dbReference type="GeneID" id="97442834"/>
<dbReference type="KEGG" id="ece:Z4664"/>
<dbReference type="KEGG" id="ecs:ECs_4159"/>
<dbReference type="PATRIC" id="fig|386585.9.peg.4342"/>
<dbReference type="eggNOG" id="COG0203">
    <property type="taxonomic scope" value="Bacteria"/>
</dbReference>
<dbReference type="HOGENOM" id="CLU_074407_2_0_6"/>
<dbReference type="OMA" id="EHKRINT"/>
<dbReference type="Proteomes" id="UP000000558">
    <property type="component" value="Chromosome"/>
</dbReference>
<dbReference type="Proteomes" id="UP000002519">
    <property type="component" value="Chromosome"/>
</dbReference>
<dbReference type="GO" id="GO:0022625">
    <property type="term" value="C:cytosolic large ribosomal subunit"/>
    <property type="evidence" value="ECO:0007669"/>
    <property type="project" value="TreeGrafter"/>
</dbReference>
<dbReference type="GO" id="GO:0003735">
    <property type="term" value="F:structural constituent of ribosome"/>
    <property type="evidence" value="ECO:0007669"/>
    <property type="project" value="InterPro"/>
</dbReference>
<dbReference type="GO" id="GO:0006412">
    <property type="term" value="P:translation"/>
    <property type="evidence" value="ECO:0007669"/>
    <property type="project" value="UniProtKB-UniRule"/>
</dbReference>
<dbReference type="FunFam" id="3.90.1030.10:FF:000001">
    <property type="entry name" value="50S ribosomal protein L17"/>
    <property type="match status" value="1"/>
</dbReference>
<dbReference type="Gene3D" id="3.90.1030.10">
    <property type="entry name" value="Ribosomal protein L17"/>
    <property type="match status" value="1"/>
</dbReference>
<dbReference type="HAMAP" id="MF_01368">
    <property type="entry name" value="Ribosomal_bL17"/>
    <property type="match status" value="1"/>
</dbReference>
<dbReference type="InterPro" id="IPR000456">
    <property type="entry name" value="Ribosomal_bL17"/>
</dbReference>
<dbReference type="InterPro" id="IPR047859">
    <property type="entry name" value="Ribosomal_bL17_CS"/>
</dbReference>
<dbReference type="InterPro" id="IPR036373">
    <property type="entry name" value="Ribosomal_bL17_sf"/>
</dbReference>
<dbReference type="NCBIfam" id="TIGR00059">
    <property type="entry name" value="L17"/>
    <property type="match status" value="1"/>
</dbReference>
<dbReference type="PANTHER" id="PTHR14413:SF16">
    <property type="entry name" value="LARGE RIBOSOMAL SUBUNIT PROTEIN BL17M"/>
    <property type="match status" value="1"/>
</dbReference>
<dbReference type="PANTHER" id="PTHR14413">
    <property type="entry name" value="RIBOSOMAL PROTEIN L17"/>
    <property type="match status" value="1"/>
</dbReference>
<dbReference type="Pfam" id="PF01196">
    <property type="entry name" value="Ribosomal_L17"/>
    <property type="match status" value="1"/>
</dbReference>
<dbReference type="SUPFAM" id="SSF64263">
    <property type="entry name" value="Prokaryotic ribosomal protein L17"/>
    <property type="match status" value="1"/>
</dbReference>
<dbReference type="PROSITE" id="PS01167">
    <property type="entry name" value="RIBOSOMAL_L17"/>
    <property type="match status" value="1"/>
</dbReference>